<keyword id="KW-0349">Heme</keyword>
<keyword id="KW-0376">Hydrogen peroxide</keyword>
<keyword id="KW-0408">Iron</keyword>
<keyword id="KW-0479">Metal-binding</keyword>
<keyword id="KW-0560">Oxidoreductase</keyword>
<keyword id="KW-0575">Peroxidase</keyword>
<feature type="chain" id="PRO_0000354877" description="Catalase-peroxidase 2">
    <location>
        <begin position="1"/>
        <end position="728"/>
    </location>
</feature>
<feature type="region of interest" description="Disordered" evidence="2">
    <location>
        <begin position="338"/>
        <end position="362"/>
    </location>
</feature>
<feature type="active site" description="Proton acceptor" evidence="1">
    <location>
        <position position="92"/>
    </location>
</feature>
<feature type="binding site" description="axial binding residue" evidence="1">
    <location>
        <position position="255"/>
    </location>
    <ligand>
        <name>heme b</name>
        <dbReference type="ChEBI" id="CHEBI:60344"/>
    </ligand>
    <ligandPart>
        <name>Fe</name>
        <dbReference type="ChEBI" id="CHEBI:18248"/>
    </ligandPart>
</feature>
<feature type="site" description="Transition state stabilizer" evidence="1">
    <location>
        <position position="88"/>
    </location>
</feature>
<feature type="cross-link" description="Tryptophyl-tyrosyl-methioninium (Trp-Tyr) (with M-240)" evidence="1">
    <location>
        <begin position="91"/>
        <end position="214"/>
    </location>
</feature>
<feature type="cross-link" description="Tryptophyl-tyrosyl-methioninium (Tyr-Met) (with W-91)" evidence="1">
    <location>
        <begin position="214"/>
        <end position="240"/>
    </location>
</feature>
<name>KATG2_CUPPJ</name>
<sequence length="728" mass="79863">MSTEAKCPFNHAAGSGTSNRDWWPHQLNLGILRQHSSLADPMDKGFNYAEEFKSLDLAAVKHDLAALMTVSQDWWPADFGHYGGLFIRMAWHAAGTYRTGDGRGGAGSGQQRFAPLNSWPDNVNLDKARRLLWPIKQKYGKKISWADLIVLTGNVALESMGFKTFGFGGGREDVWEPDQDVYWGSETTWLADKRYSGVRDLENPLAAVQMGLIYVNPEGPNGNPDPAKAAVDIRETFARMAMNDEETVALIAGGHTFGKTHGAGPASHVGPEPEAAGIEEQGLGWRSSFGSGKGSDAITSGLEVIWTSTPTKWSNNFFWNLFGYEWELTKSPAGAHQWKPNGDAGANSIPDPYDPSRRRGPTMLTTDLSLRVDPAYEKISRRFHENPDQFADAFARAWFKLTHRDMGPRSRYLGPEVPAEELIWQDPIPAVDHVLIDEQDVAALKGKILATGVPVSQLVSTAWASASTFRGSDKRGGANGARIRLAPQKDWEVNQPAVLAQVLETLEGIRNEFNSSQSGGKKVSLADLIVLAGCAGIEQAAKKGGHDVKVPFTPGRMDATQEQTDVESFSVMEPIADGFRNYLKGTYAVTAETLLVDKAQLLTLTVPEVTALVGGMRVLNANFGQTQHGVFTDRPETLTNDFFVNVLDMGTEWKPTADNKDLFEGYDRATGKLKWTGTRVDLIFGSNSELRAVAEVYGCADAKEKFVQDFVAAWNKVMNLDRFEAANR</sequence>
<dbReference type="EC" id="1.11.1.21" evidence="1"/>
<dbReference type="EMBL" id="CP000090">
    <property type="protein sequence ID" value="AAZ61106.1"/>
    <property type="molecule type" value="Genomic_DNA"/>
</dbReference>
<dbReference type="SMR" id="Q470S7"/>
<dbReference type="STRING" id="264198.Reut_A1741"/>
<dbReference type="PeroxiBase" id="2322">
    <property type="entry name" value="ReCP01_JMP134"/>
</dbReference>
<dbReference type="KEGG" id="reu:Reut_A1741"/>
<dbReference type="eggNOG" id="COG0376">
    <property type="taxonomic scope" value="Bacteria"/>
</dbReference>
<dbReference type="HOGENOM" id="CLU_025424_2_0_4"/>
<dbReference type="OrthoDB" id="9759743at2"/>
<dbReference type="GO" id="GO:0005829">
    <property type="term" value="C:cytosol"/>
    <property type="evidence" value="ECO:0007669"/>
    <property type="project" value="TreeGrafter"/>
</dbReference>
<dbReference type="GO" id="GO:0004096">
    <property type="term" value="F:catalase activity"/>
    <property type="evidence" value="ECO:0007669"/>
    <property type="project" value="UniProtKB-UniRule"/>
</dbReference>
<dbReference type="GO" id="GO:0020037">
    <property type="term" value="F:heme binding"/>
    <property type="evidence" value="ECO:0007669"/>
    <property type="project" value="InterPro"/>
</dbReference>
<dbReference type="GO" id="GO:0046872">
    <property type="term" value="F:metal ion binding"/>
    <property type="evidence" value="ECO:0007669"/>
    <property type="project" value="UniProtKB-KW"/>
</dbReference>
<dbReference type="GO" id="GO:0070301">
    <property type="term" value="P:cellular response to hydrogen peroxide"/>
    <property type="evidence" value="ECO:0007669"/>
    <property type="project" value="TreeGrafter"/>
</dbReference>
<dbReference type="GO" id="GO:0042744">
    <property type="term" value="P:hydrogen peroxide catabolic process"/>
    <property type="evidence" value="ECO:0007669"/>
    <property type="project" value="UniProtKB-KW"/>
</dbReference>
<dbReference type="CDD" id="cd00649">
    <property type="entry name" value="catalase_peroxidase_1"/>
    <property type="match status" value="1"/>
</dbReference>
<dbReference type="CDD" id="cd08200">
    <property type="entry name" value="catalase_peroxidase_2"/>
    <property type="match status" value="1"/>
</dbReference>
<dbReference type="FunFam" id="1.10.420.10:FF:000002">
    <property type="entry name" value="Catalase-peroxidase"/>
    <property type="match status" value="1"/>
</dbReference>
<dbReference type="FunFam" id="1.10.420.10:FF:000004">
    <property type="entry name" value="Catalase-peroxidase"/>
    <property type="match status" value="1"/>
</dbReference>
<dbReference type="FunFam" id="1.10.520.10:FF:000002">
    <property type="entry name" value="Catalase-peroxidase"/>
    <property type="match status" value="1"/>
</dbReference>
<dbReference type="FunFam" id="1.10.520.10:FF:000004">
    <property type="entry name" value="Catalase-peroxidase"/>
    <property type="match status" value="1"/>
</dbReference>
<dbReference type="Gene3D" id="1.10.520.10">
    <property type="match status" value="2"/>
</dbReference>
<dbReference type="Gene3D" id="1.10.420.10">
    <property type="entry name" value="Peroxidase, domain 2"/>
    <property type="match status" value="2"/>
</dbReference>
<dbReference type="HAMAP" id="MF_01961">
    <property type="entry name" value="Catal_peroxid"/>
    <property type="match status" value="1"/>
</dbReference>
<dbReference type="InterPro" id="IPR000763">
    <property type="entry name" value="Catalase_peroxidase"/>
</dbReference>
<dbReference type="InterPro" id="IPR002016">
    <property type="entry name" value="Haem_peroxidase"/>
</dbReference>
<dbReference type="InterPro" id="IPR010255">
    <property type="entry name" value="Haem_peroxidase_sf"/>
</dbReference>
<dbReference type="InterPro" id="IPR019794">
    <property type="entry name" value="Peroxidases_AS"/>
</dbReference>
<dbReference type="InterPro" id="IPR019793">
    <property type="entry name" value="Peroxidases_heam-ligand_BS"/>
</dbReference>
<dbReference type="NCBIfam" id="TIGR00198">
    <property type="entry name" value="cat_per_HPI"/>
    <property type="match status" value="1"/>
</dbReference>
<dbReference type="NCBIfam" id="NF011635">
    <property type="entry name" value="PRK15061.1"/>
    <property type="match status" value="1"/>
</dbReference>
<dbReference type="PANTHER" id="PTHR30555:SF0">
    <property type="entry name" value="CATALASE-PEROXIDASE"/>
    <property type="match status" value="1"/>
</dbReference>
<dbReference type="PANTHER" id="PTHR30555">
    <property type="entry name" value="HYDROPEROXIDASE I, BIFUNCTIONAL CATALASE-PEROXIDASE"/>
    <property type="match status" value="1"/>
</dbReference>
<dbReference type="Pfam" id="PF00141">
    <property type="entry name" value="peroxidase"/>
    <property type="match status" value="2"/>
</dbReference>
<dbReference type="PRINTS" id="PR00460">
    <property type="entry name" value="BPEROXIDASE"/>
</dbReference>
<dbReference type="PRINTS" id="PR00458">
    <property type="entry name" value="PEROXIDASE"/>
</dbReference>
<dbReference type="SUPFAM" id="SSF48113">
    <property type="entry name" value="Heme-dependent peroxidases"/>
    <property type="match status" value="2"/>
</dbReference>
<dbReference type="PROSITE" id="PS00435">
    <property type="entry name" value="PEROXIDASE_1"/>
    <property type="match status" value="1"/>
</dbReference>
<dbReference type="PROSITE" id="PS00436">
    <property type="entry name" value="PEROXIDASE_2"/>
    <property type="match status" value="1"/>
</dbReference>
<dbReference type="PROSITE" id="PS50873">
    <property type="entry name" value="PEROXIDASE_4"/>
    <property type="match status" value="2"/>
</dbReference>
<comment type="function">
    <text evidence="1">Bifunctional enzyme with both catalase and broad-spectrum peroxidase activity.</text>
</comment>
<comment type="catalytic activity">
    <reaction evidence="1">
        <text>H2O2 + AH2 = A + 2 H2O</text>
        <dbReference type="Rhea" id="RHEA:30275"/>
        <dbReference type="ChEBI" id="CHEBI:13193"/>
        <dbReference type="ChEBI" id="CHEBI:15377"/>
        <dbReference type="ChEBI" id="CHEBI:16240"/>
        <dbReference type="ChEBI" id="CHEBI:17499"/>
        <dbReference type="EC" id="1.11.1.21"/>
    </reaction>
</comment>
<comment type="catalytic activity">
    <reaction evidence="1">
        <text>2 H2O2 = O2 + 2 H2O</text>
        <dbReference type="Rhea" id="RHEA:20309"/>
        <dbReference type="ChEBI" id="CHEBI:15377"/>
        <dbReference type="ChEBI" id="CHEBI:15379"/>
        <dbReference type="ChEBI" id="CHEBI:16240"/>
        <dbReference type="EC" id="1.11.1.21"/>
    </reaction>
</comment>
<comment type="cofactor">
    <cofactor evidence="1">
        <name>heme b</name>
        <dbReference type="ChEBI" id="CHEBI:60344"/>
    </cofactor>
    <text evidence="1">Binds 1 heme b (iron(II)-protoporphyrin IX) group per dimer.</text>
</comment>
<comment type="subunit">
    <text evidence="1">Homodimer or homotetramer.</text>
</comment>
<comment type="PTM">
    <text evidence="1">Formation of the three residue Trp-Tyr-Met cross-link is important for the catalase, but not the peroxidase activity of the enzyme.</text>
</comment>
<comment type="similarity">
    <text evidence="1">Belongs to the peroxidase family. Peroxidase/catalase subfamily.</text>
</comment>
<protein>
    <recommendedName>
        <fullName evidence="1">Catalase-peroxidase 2</fullName>
        <shortName evidence="1">CP 2</shortName>
        <ecNumber evidence="1">1.11.1.21</ecNumber>
    </recommendedName>
    <alternativeName>
        <fullName evidence="1">Peroxidase/catalase 2</fullName>
    </alternativeName>
</protein>
<gene>
    <name evidence="1" type="primary">katG2</name>
    <name type="ordered locus">Reut_A1741</name>
</gene>
<organism>
    <name type="scientific">Cupriavidus pinatubonensis (strain JMP 134 / LMG 1197)</name>
    <name type="common">Cupriavidus necator (strain JMP 134)</name>
    <dbReference type="NCBI Taxonomy" id="264198"/>
    <lineage>
        <taxon>Bacteria</taxon>
        <taxon>Pseudomonadati</taxon>
        <taxon>Pseudomonadota</taxon>
        <taxon>Betaproteobacteria</taxon>
        <taxon>Burkholderiales</taxon>
        <taxon>Burkholderiaceae</taxon>
        <taxon>Cupriavidus</taxon>
    </lineage>
</organism>
<reference key="1">
    <citation type="journal article" date="2010" name="PLoS ONE">
        <title>The complete multipartite genome sequence of Cupriavidus necator JMP134, a versatile pollutant degrader.</title>
        <authorList>
            <person name="Lykidis A."/>
            <person name="Perez-Pantoja D."/>
            <person name="Ledger T."/>
            <person name="Mavromatis K."/>
            <person name="Anderson I.J."/>
            <person name="Ivanova N.N."/>
            <person name="Hooper S.D."/>
            <person name="Lapidus A."/>
            <person name="Lucas S."/>
            <person name="Gonzalez B."/>
            <person name="Kyrpides N.C."/>
        </authorList>
    </citation>
    <scope>NUCLEOTIDE SEQUENCE [LARGE SCALE GENOMIC DNA]</scope>
    <source>
        <strain>JMP134 / LMG 1197</strain>
    </source>
</reference>
<evidence type="ECO:0000255" key="1">
    <source>
        <dbReference type="HAMAP-Rule" id="MF_01961"/>
    </source>
</evidence>
<evidence type="ECO:0000256" key="2">
    <source>
        <dbReference type="SAM" id="MobiDB-lite"/>
    </source>
</evidence>
<accession>Q470S7</accession>
<proteinExistence type="inferred from homology"/>